<evidence type="ECO:0000255" key="1">
    <source>
        <dbReference type="PROSITE-ProRule" id="PRU00088"/>
    </source>
</evidence>
<evidence type="ECO:0000305" key="2"/>
<proteinExistence type="inferred from homology"/>
<keyword id="KW-0249">Electron transport</keyword>
<keyword id="KW-0285">Flavoprotein</keyword>
<keyword id="KW-0288">FMN</keyword>
<keyword id="KW-0813">Transport</keyword>
<sequence length="160" mass="17763">MKISILYSSKTGKTERVAKLIEEGVKRSGNIEVKTMNLDAVDKKFLQESEGIIFGTPTYYANISWEMKKWIDESSEFNLEGKLGAAFSTANSIAGGSDIALLTILNHLMVKGMLVYSGGVAFGKPKTHLGYVHINEIQENEDENARIFGERIANKVKQIF</sequence>
<reference key="1">
    <citation type="journal article" date="1991" name="J. Bacteriol.">
        <title>Metronidazole activation and isolation of Clostridium acetobutylicum electron transport genes.</title>
        <authorList>
            <person name="Santangelo J.D."/>
            <person name="Jones D.T."/>
            <person name="Woods D.R."/>
        </authorList>
    </citation>
    <scope>NUCLEOTIDE SEQUENCE [GENOMIC DNA]</scope>
</reference>
<organism>
    <name type="scientific">Clostridium saccharobutylicum</name>
    <dbReference type="NCBI Taxonomy" id="169679"/>
    <lineage>
        <taxon>Bacteria</taxon>
        <taxon>Bacillati</taxon>
        <taxon>Bacillota</taxon>
        <taxon>Clostridia</taxon>
        <taxon>Eubacteriales</taxon>
        <taxon>Clostridiaceae</taxon>
        <taxon>Clostridium</taxon>
    </lineage>
</organism>
<name>FLAV_CLOSA</name>
<gene>
    <name type="primary">floX</name>
</gene>
<dbReference type="EMBL" id="M36770">
    <property type="protein sequence ID" value="AAA23238.1"/>
    <property type="molecule type" value="Genomic_DNA"/>
</dbReference>
<dbReference type="RefSeq" id="WP_022744155.1">
    <property type="nucleotide sequence ID" value="NZ_LZZA01000058.1"/>
</dbReference>
<dbReference type="SMR" id="P18855"/>
<dbReference type="STRING" id="169679.CSACC_08450"/>
<dbReference type="GO" id="GO:0016020">
    <property type="term" value="C:membrane"/>
    <property type="evidence" value="ECO:0007669"/>
    <property type="project" value="TreeGrafter"/>
</dbReference>
<dbReference type="GO" id="GO:0009055">
    <property type="term" value="F:electron transfer activity"/>
    <property type="evidence" value="ECO:0007669"/>
    <property type="project" value="InterPro"/>
</dbReference>
<dbReference type="GO" id="GO:0010181">
    <property type="term" value="F:FMN binding"/>
    <property type="evidence" value="ECO:0007669"/>
    <property type="project" value="InterPro"/>
</dbReference>
<dbReference type="GO" id="GO:0003955">
    <property type="term" value="F:NAD(P)H dehydrogenase (quinone) activity"/>
    <property type="evidence" value="ECO:0007669"/>
    <property type="project" value="TreeGrafter"/>
</dbReference>
<dbReference type="Gene3D" id="3.40.50.360">
    <property type="match status" value="1"/>
</dbReference>
<dbReference type="InterPro" id="IPR008254">
    <property type="entry name" value="Flavodoxin/NO_synth"/>
</dbReference>
<dbReference type="InterPro" id="IPR001226">
    <property type="entry name" value="Flavodoxin_CS"/>
</dbReference>
<dbReference type="InterPro" id="IPR029039">
    <property type="entry name" value="Flavoprotein-like_sf"/>
</dbReference>
<dbReference type="InterPro" id="IPR005025">
    <property type="entry name" value="FMN_Rdtase-like_dom"/>
</dbReference>
<dbReference type="PANTHER" id="PTHR30546">
    <property type="entry name" value="FLAVODOXIN-RELATED PROTEIN WRBA-RELATED"/>
    <property type="match status" value="1"/>
</dbReference>
<dbReference type="PANTHER" id="PTHR30546:SF23">
    <property type="entry name" value="FLAVOPROTEIN-LIKE PROTEIN YCP4-RELATED"/>
    <property type="match status" value="1"/>
</dbReference>
<dbReference type="Pfam" id="PF03358">
    <property type="entry name" value="FMN_red"/>
    <property type="match status" value="1"/>
</dbReference>
<dbReference type="SUPFAM" id="SSF52218">
    <property type="entry name" value="Flavoproteins"/>
    <property type="match status" value="1"/>
</dbReference>
<dbReference type="PROSITE" id="PS00201">
    <property type="entry name" value="FLAVODOXIN"/>
    <property type="match status" value="1"/>
</dbReference>
<dbReference type="PROSITE" id="PS50902">
    <property type="entry name" value="FLAVODOXIN_LIKE"/>
    <property type="match status" value="1"/>
</dbReference>
<protein>
    <recommendedName>
        <fullName>Flavodoxin</fullName>
    </recommendedName>
</protein>
<comment type="function">
    <text>Low-potential electron donor to a number of redox enzymes.</text>
</comment>
<comment type="cofactor">
    <cofactor>
        <name>FMN</name>
        <dbReference type="ChEBI" id="CHEBI:58210"/>
    </cofactor>
</comment>
<comment type="similarity">
    <text evidence="2">Belongs to the flavodoxin family.</text>
</comment>
<comment type="caution">
    <text evidence="2">Was originally thought to originate from C.acetobutylicum.</text>
</comment>
<accession>P18855</accession>
<feature type="chain" id="PRO_0000171614" description="Flavodoxin">
    <location>
        <begin position="1"/>
        <end position="160"/>
    </location>
</feature>
<feature type="domain" description="Flavodoxin-like" evidence="1">
    <location>
        <begin position="3"/>
        <end position="153"/>
    </location>
</feature>